<geneLocation type="chloroplast"/>
<reference key="1">
    <citation type="submission" date="2007-03" db="EMBL/GenBank/DDBJ databases">
        <title>Sequencing analysis of Lobularia maritima chloroplast DNA.</title>
        <authorList>
            <person name="Hosouchi T."/>
            <person name="Tsuruoka H."/>
            <person name="Kotani H."/>
        </authorList>
    </citation>
    <scope>NUCLEOTIDE SEQUENCE [LARGE SCALE GENOMIC DNA]</scope>
</reference>
<protein>
    <recommendedName>
        <fullName evidence="1">Photosystem I reaction center subunit IX</fullName>
    </recommendedName>
    <alternativeName>
        <fullName evidence="1">PSI-J</fullName>
    </alternativeName>
</protein>
<gene>
    <name evidence="1" type="primary">psaJ</name>
</gene>
<sequence>MRDLKTYLSVAPVLSTLWFGSLAGLLIEINRLFPDALTFPFFSF</sequence>
<proteinExistence type="inferred from homology"/>
<accession>A4QLL4</accession>
<name>PSAJ_LOBMA</name>
<comment type="function">
    <text evidence="1">May help in the organization of the PsaE and PsaF subunits.</text>
</comment>
<comment type="subcellular location">
    <subcellularLocation>
        <location evidence="1">Plastid</location>
        <location evidence="1">Chloroplast thylakoid membrane</location>
        <topology evidence="1">Single-pass membrane protein</topology>
    </subcellularLocation>
</comment>
<comment type="similarity">
    <text evidence="1">Belongs to the PsaJ family.</text>
</comment>
<feature type="chain" id="PRO_0000354156" description="Photosystem I reaction center subunit IX">
    <location>
        <begin position="1"/>
        <end position="44"/>
    </location>
</feature>
<feature type="transmembrane region" description="Helical" evidence="1">
    <location>
        <begin position="7"/>
        <end position="27"/>
    </location>
</feature>
<evidence type="ECO:0000255" key="1">
    <source>
        <dbReference type="HAMAP-Rule" id="MF_00522"/>
    </source>
</evidence>
<keyword id="KW-0150">Chloroplast</keyword>
<keyword id="KW-0472">Membrane</keyword>
<keyword id="KW-0602">Photosynthesis</keyword>
<keyword id="KW-0603">Photosystem I</keyword>
<keyword id="KW-0934">Plastid</keyword>
<keyword id="KW-0793">Thylakoid</keyword>
<keyword id="KW-0812">Transmembrane</keyword>
<keyword id="KW-1133">Transmembrane helix</keyword>
<dbReference type="EMBL" id="AP009375">
    <property type="protein sequence ID" value="BAF50569.1"/>
    <property type="molecule type" value="Genomic_DNA"/>
</dbReference>
<dbReference type="RefSeq" id="YP_001123745.1">
    <property type="nucleotide sequence ID" value="NC_009274.1"/>
</dbReference>
<dbReference type="SMR" id="A4QLL4"/>
<dbReference type="GeneID" id="4964870"/>
<dbReference type="GO" id="GO:0009535">
    <property type="term" value="C:chloroplast thylakoid membrane"/>
    <property type="evidence" value="ECO:0007669"/>
    <property type="project" value="UniProtKB-SubCell"/>
</dbReference>
<dbReference type="GO" id="GO:0009522">
    <property type="term" value="C:photosystem I"/>
    <property type="evidence" value="ECO:0007669"/>
    <property type="project" value="UniProtKB-KW"/>
</dbReference>
<dbReference type="GO" id="GO:0015979">
    <property type="term" value="P:photosynthesis"/>
    <property type="evidence" value="ECO:0007669"/>
    <property type="project" value="UniProtKB-UniRule"/>
</dbReference>
<dbReference type="FunFam" id="1.20.5.510:FF:000001">
    <property type="entry name" value="Photosystem I reaction center subunit IX"/>
    <property type="match status" value="1"/>
</dbReference>
<dbReference type="Gene3D" id="1.20.5.510">
    <property type="entry name" value="Single helix bin"/>
    <property type="match status" value="1"/>
</dbReference>
<dbReference type="HAMAP" id="MF_00522">
    <property type="entry name" value="PSI_PsaJ"/>
    <property type="match status" value="1"/>
</dbReference>
<dbReference type="InterPro" id="IPR002615">
    <property type="entry name" value="PSI_PsaJ"/>
</dbReference>
<dbReference type="InterPro" id="IPR036062">
    <property type="entry name" value="PSI_PsaJ_sf"/>
</dbReference>
<dbReference type="PANTHER" id="PTHR36082">
    <property type="match status" value="1"/>
</dbReference>
<dbReference type="PANTHER" id="PTHR36082:SF2">
    <property type="entry name" value="PHOTOSYSTEM I REACTION CENTER SUBUNIT IX"/>
    <property type="match status" value="1"/>
</dbReference>
<dbReference type="Pfam" id="PF01701">
    <property type="entry name" value="PSI_PsaJ"/>
    <property type="match status" value="1"/>
</dbReference>
<dbReference type="SUPFAM" id="SSF81544">
    <property type="entry name" value="Subunit IX of photosystem I reaction centre, PsaJ"/>
    <property type="match status" value="1"/>
</dbReference>
<organism>
    <name type="scientific">Lobularia maritima</name>
    <name type="common">Sweet alyssum</name>
    <name type="synonym">Alyssum maritimum</name>
    <dbReference type="NCBI Taxonomy" id="226051"/>
    <lineage>
        <taxon>Eukaryota</taxon>
        <taxon>Viridiplantae</taxon>
        <taxon>Streptophyta</taxon>
        <taxon>Embryophyta</taxon>
        <taxon>Tracheophyta</taxon>
        <taxon>Spermatophyta</taxon>
        <taxon>Magnoliopsida</taxon>
        <taxon>eudicotyledons</taxon>
        <taxon>Gunneridae</taxon>
        <taxon>Pentapetalae</taxon>
        <taxon>rosids</taxon>
        <taxon>malvids</taxon>
        <taxon>Brassicales</taxon>
        <taxon>Brassicaceae</taxon>
        <taxon>Anastaticeae</taxon>
        <taxon>Lobularia</taxon>
    </lineage>
</organism>